<evidence type="ECO:0000250" key="1"/>
<evidence type="ECO:0000305" key="2"/>
<comment type="function">
    <text evidence="1">Binds specifically to cytosolic chaperonin (c-CPN) and transfers target proteins to it. Binds to nascent polypeptide chain and promotes folding in an environment in which there are many competing pathways for nonnative proteins (By similarity).</text>
</comment>
<comment type="subunit">
    <text evidence="1">Heterohexamer of two PFD-alpha type and four PFD-beta type subunits.</text>
</comment>
<comment type="similarity">
    <text evidence="2">Belongs to the prefoldin subunit alpha family.</text>
</comment>
<proteinExistence type="inferred from homology"/>
<dbReference type="EMBL" id="CU329670">
    <property type="protein sequence ID" value="CAA93164.1"/>
    <property type="molecule type" value="Genomic_DNA"/>
</dbReference>
<dbReference type="PIR" id="T38765">
    <property type="entry name" value="T38765"/>
</dbReference>
<dbReference type="SMR" id="Q10143"/>
<dbReference type="BioGRID" id="279800">
    <property type="interactions" value="106"/>
</dbReference>
<dbReference type="FunCoup" id="Q10143">
    <property type="interactions" value="600"/>
</dbReference>
<dbReference type="STRING" id="284812.Q10143"/>
<dbReference type="iPTMnet" id="Q10143"/>
<dbReference type="PaxDb" id="4896-SPAC3H8.07c.1"/>
<dbReference type="EnsemblFungi" id="SPAC3H8.07c.1">
    <property type="protein sequence ID" value="SPAC3H8.07c.1:pep"/>
    <property type="gene ID" value="SPAC3H8.07c"/>
</dbReference>
<dbReference type="KEGG" id="spo:2543378"/>
<dbReference type="PomBase" id="SPAC3H8.07c"/>
<dbReference type="VEuPathDB" id="FungiDB:SPAC3H8.07c"/>
<dbReference type="eggNOG" id="KOG3313">
    <property type="taxonomic scope" value="Eukaryota"/>
</dbReference>
<dbReference type="HOGENOM" id="CLU_083737_0_0_1"/>
<dbReference type="InParanoid" id="Q10143"/>
<dbReference type="OMA" id="YNWDVAQ"/>
<dbReference type="PhylomeDB" id="Q10143"/>
<dbReference type="PRO" id="PR:Q10143"/>
<dbReference type="Proteomes" id="UP000002485">
    <property type="component" value="Chromosome I"/>
</dbReference>
<dbReference type="GO" id="GO:0005737">
    <property type="term" value="C:cytoplasm"/>
    <property type="evidence" value="ECO:0000318"/>
    <property type="project" value="GO_Central"/>
</dbReference>
<dbReference type="GO" id="GO:0005829">
    <property type="term" value="C:cytosol"/>
    <property type="evidence" value="ECO:0007005"/>
    <property type="project" value="PomBase"/>
</dbReference>
<dbReference type="GO" id="GO:0005634">
    <property type="term" value="C:nucleus"/>
    <property type="evidence" value="ECO:0007005"/>
    <property type="project" value="PomBase"/>
</dbReference>
<dbReference type="GO" id="GO:0016272">
    <property type="term" value="C:prefoldin complex"/>
    <property type="evidence" value="ECO:0000318"/>
    <property type="project" value="GO_Central"/>
</dbReference>
<dbReference type="GO" id="GO:0015631">
    <property type="term" value="F:tubulin binding"/>
    <property type="evidence" value="ECO:0000318"/>
    <property type="project" value="GO_Central"/>
</dbReference>
<dbReference type="GO" id="GO:0007017">
    <property type="term" value="P:microtubule-based process"/>
    <property type="evidence" value="ECO:0000318"/>
    <property type="project" value="GO_Central"/>
</dbReference>
<dbReference type="GO" id="GO:0006457">
    <property type="term" value="P:protein folding"/>
    <property type="evidence" value="ECO:0000305"/>
    <property type="project" value="PomBase"/>
</dbReference>
<dbReference type="GO" id="GO:0007021">
    <property type="term" value="P:tubulin complex assembly"/>
    <property type="evidence" value="ECO:0000318"/>
    <property type="project" value="GO_Central"/>
</dbReference>
<dbReference type="CDD" id="cd23156">
    <property type="entry name" value="Prefoldin_3"/>
    <property type="match status" value="1"/>
</dbReference>
<dbReference type="FunFam" id="1.10.287.370:FF:000014">
    <property type="entry name" value="Prefoldin subunit 3"/>
    <property type="match status" value="1"/>
</dbReference>
<dbReference type="Gene3D" id="1.10.287.370">
    <property type="match status" value="1"/>
</dbReference>
<dbReference type="InterPro" id="IPR016655">
    <property type="entry name" value="PFD3"/>
</dbReference>
<dbReference type="InterPro" id="IPR009053">
    <property type="entry name" value="Prefoldin"/>
</dbReference>
<dbReference type="InterPro" id="IPR004127">
    <property type="entry name" value="Prefoldin_subunit_alpha"/>
</dbReference>
<dbReference type="PANTHER" id="PTHR12409">
    <property type="entry name" value="PREFOLDIN SUBUNIT 3"/>
    <property type="match status" value="1"/>
</dbReference>
<dbReference type="PANTHER" id="PTHR12409:SF0">
    <property type="entry name" value="PREFOLDIN SUBUNIT 3"/>
    <property type="match status" value="1"/>
</dbReference>
<dbReference type="Pfam" id="PF02996">
    <property type="entry name" value="Prefoldin"/>
    <property type="match status" value="1"/>
</dbReference>
<dbReference type="PIRSF" id="PIRSF016396">
    <property type="entry name" value="Prefoldin_subunit_3"/>
    <property type="match status" value="1"/>
</dbReference>
<dbReference type="SUPFAM" id="SSF46579">
    <property type="entry name" value="Prefoldin"/>
    <property type="match status" value="1"/>
</dbReference>
<sequence length="169" mass="19445">MSSSNPRGIPPAQFFEFKELSMEEAQGHLEKFQEAIAKYKFMETSVVRRVASLDDKIPDIRKTLQSVQFLKERQGDSFTVTYELNDTLNAKAEVEAKDNVYLWLGANVMLEYTVEEAEALLTQKLNSAEETLKACKEDLEFLRAQVTTMEVNTARVYNYTVLLRKKTKM</sequence>
<gene>
    <name type="ORF">SPAC3H8.07c</name>
</gene>
<keyword id="KW-0143">Chaperone</keyword>
<keyword id="KW-1185">Reference proteome</keyword>
<protein>
    <recommendedName>
        <fullName>Probable prefoldin subunit 3</fullName>
    </recommendedName>
</protein>
<reference key="1">
    <citation type="journal article" date="2002" name="Nature">
        <title>The genome sequence of Schizosaccharomyces pombe.</title>
        <authorList>
            <person name="Wood V."/>
            <person name="Gwilliam R."/>
            <person name="Rajandream M.A."/>
            <person name="Lyne M.H."/>
            <person name="Lyne R."/>
            <person name="Stewart A."/>
            <person name="Sgouros J.G."/>
            <person name="Peat N."/>
            <person name="Hayles J."/>
            <person name="Baker S.G."/>
            <person name="Basham D."/>
            <person name="Bowman S."/>
            <person name="Brooks K."/>
            <person name="Brown D."/>
            <person name="Brown S."/>
            <person name="Chillingworth T."/>
            <person name="Churcher C.M."/>
            <person name="Collins M."/>
            <person name="Connor R."/>
            <person name="Cronin A."/>
            <person name="Davis P."/>
            <person name="Feltwell T."/>
            <person name="Fraser A."/>
            <person name="Gentles S."/>
            <person name="Goble A."/>
            <person name="Hamlin N."/>
            <person name="Harris D.E."/>
            <person name="Hidalgo J."/>
            <person name="Hodgson G."/>
            <person name="Holroyd S."/>
            <person name="Hornsby T."/>
            <person name="Howarth S."/>
            <person name="Huckle E.J."/>
            <person name="Hunt S."/>
            <person name="Jagels K."/>
            <person name="James K.D."/>
            <person name="Jones L."/>
            <person name="Jones M."/>
            <person name="Leather S."/>
            <person name="McDonald S."/>
            <person name="McLean J."/>
            <person name="Mooney P."/>
            <person name="Moule S."/>
            <person name="Mungall K.L."/>
            <person name="Murphy L.D."/>
            <person name="Niblett D."/>
            <person name="Odell C."/>
            <person name="Oliver K."/>
            <person name="O'Neil S."/>
            <person name="Pearson D."/>
            <person name="Quail M.A."/>
            <person name="Rabbinowitsch E."/>
            <person name="Rutherford K.M."/>
            <person name="Rutter S."/>
            <person name="Saunders D."/>
            <person name="Seeger K."/>
            <person name="Sharp S."/>
            <person name="Skelton J."/>
            <person name="Simmonds M.N."/>
            <person name="Squares R."/>
            <person name="Squares S."/>
            <person name="Stevens K."/>
            <person name="Taylor K."/>
            <person name="Taylor R.G."/>
            <person name="Tivey A."/>
            <person name="Walsh S.V."/>
            <person name="Warren T."/>
            <person name="Whitehead S."/>
            <person name="Woodward J.R."/>
            <person name="Volckaert G."/>
            <person name="Aert R."/>
            <person name="Robben J."/>
            <person name="Grymonprez B."/>
            <person name="Weltjens I."/>
            <person name="Vanstreels E."/>
            <person name="Rieger M."/>
            <person name="Schaefer M."/>
            <person name="Mueller-Auer S."/>
            <person name="Gabel C."/>
            <person name="Fuchs M."/>
            <person name="Duesterhoeft A."/>
            <person name="Fritzc C."/>
            <person name="Holzer E."/>
            <person name="Moestl D."/>
            <person name="Hilbert H."/>
            <person name="Borzym K."/>
            <person name="Langer I."/>
            <person name="Beck A."/>
            <person name="Lehrach H."/>
            <person name="Reinhardt R."/>
            <person name="Pohl T.M."/>
            <person name="Eger P."/>
            <person name="Zimmermann W."/>
            <person name="Wedler H."/>
            <person name="Wambutt R."/>
            <person name="Purnelle B."/>
            <person name="Goffeau A."/>
            <person name="Cadieu E."/>
            <person name="Dreano S."/>
            <person name="Gloux S."/>
            <person name="Lelaure V."/>
            <person name="Mottier S."/>
            <person name="Galibert F."/>
            <person name="Aves S.J."/>
            <person name="Xiang Z."/>
            <person name="Hunt C."/>
            <person name="Moore K."/>
            <person name="Hurst S.M."/>
            <person name="Lucas M."/>
            <person name="Rochet M."/>
            <person name="Gaillardin C."/>
            <person name="Tallada V.A."/>
            <person name="Garzon A."/>
            <person name="Thode G."/>
            <person name="Daga R.R."/>
            <person name="Cruzado L."/>
            <person name="Jimenez J."/>
            <person name="Sanchez M."/>
            <person name="del Rey F."/>
            <person name="Benito J."/>
            <person name="Dominguez A."/>
            <person name="Revuelta J.L."/>
            <person name="Moreno S."/>
            <person name="Armstrong J."/>
            <person name="Forsburg S.L."/>
            <person name="Cerutti L."/>
            <person name="Lowe T."/>
            <person name="McCombie W.R."/>
            <person name="Paulsen I."/>
            <person name="Potashkin J."/>
            <person name="Shpakovski G.V."/>
            <person name="Ussery D."/>
            <person name="Barrell B.G."/>
            <person name="Nurse P."/>
        </authorList>
    </citation>
    <scope>NUCLEOTIDE SEQUENCE [LARGE SCALE GENOMIC DNA]</scope>
    <source>
        <strain>972 / ATCC 24843</strain>
    </source>
</reference>
<feature type="chain" id="PRO_0000153658" description="Probable prefoldin subunit 3">
    <location>
        <begin position="1"/>
        <end position="169"/>
    </location>
</feature>
<name>PFD3_SCHPO</name>
<accession>Q10143</accession>
<organism>
    <name type="scientific">Schizosaccharomyces pombe (strain 972 / ATCC 24843)</name>
    <name type="common">Fission yeast</name>
    <dbReference type="NCBI Taxonomy" id="284812"/>
    <lineage>
        <taxon>Eukaryota</taxon>
        <taxon>Fungi</taxon>
        <taxon>Dikarya</taxon>
        <taxon>Ascomycota</taxon>
        <taxon>Taphrinomycotina</taxon>
        <taxon>Schizosaccharomycetes</taxon>
        <taxon>Schizosaccharomycetales</taxon>
        <taxon>Schizosaccharomycetaceae</taxon>
        <taxon>Schizosaccharomyces</taxon>
    </lineage>
</organism>